<reference key="1">
    <citation type="submission" date="2005-03" db="EMBL/GenBank/DDBJ databases">
        <title>Brevibacillus brevis strain 47, complete genome.</title>
        <authorList>
            <person name="Hosoyama A."/>
            <person name="Yamada R."/>
            <person name="Hongo Y."/>
            <person name="Terui Y."/>
            <person name="Ankai A."/>
            <person name="Masuyama W."/>
            <person name="Sekiguchi M."/>
            <person name="Takeda T."/>
            <person name="Asano K."/>
            <person name="Ohji S."/>
            <person name="Ichikawa N."/>
            <person name="Narita S."/>
            <person name="Aoki N."/>
            <person name="Miura H."/>
            <person name="Matsushita S."/>
            <person name="Sekigawa T."/>
            <person name="Yamagata H."/>
            <person name="Yoshikawa H."/>
            <person name="Udaka S."/>
            <person name="Tanikawa S."/>
            <person name="Fujita N."/>
        </authorList>
    </citation>
    <scope>NUCLEOTIDE SEQUENCE [LARGE SCALE GENOMIC DNA]</scope>
    <source>
        <strain>47 / JCM 6285 / NBRC 100599</strain>
    </source>
</reference>
<keyword id="KW-0963">Cytoplasm</keyword>
<keyword id="KW-0413">Isomerase</keyword>
<keyword id="KW-0627">Porphyrin biosynthesis</keyword>
<keyword id="KW-0663">Pyridoxal phosphate</keyword>
<keyword id="KW-1185">Reference proteome</keyword>
<protein>
    <recommendedName>
        <fullName evidence="1">Glutamate-1-semialdehyde 2,1-aminomutase 2</fullName>
        <shortName evidence="1">GSA 2</shortName>
        <ecNumber evidence="1">5.4.3.8</ecNumber>
    </recommendedName>
    <alternativeName>
        <fullName evidence="1">Glutamate-1-semialdehyde aminotransferase 2</fullName>
        <shortName evidence="1">GSA-AT 2</shortName>
    </alternativeName>
</protein>
<organism>
    <name type="scientific">Brevibacillus brevis (strain 47 / JCM 6285 / NBRC 100599)</name>
    <dbReference type="NCBI Taxonomy" id="358681"/>
    <lineage>
        <taxon>Bacteria</taxon>
        <taxon>Bacillati</taxon>
        <taxon>Bacillota</taxon>
        <taxon>Bacilli</taxon>
        <taxon>Bacillales</taxon>
        <taxon>Paenibacillaceae</taxon>
        <taxon>Brevibacillus</taxon>
    </lineage>
</organism>
<comment type="catalytic activity">
    <reaction evidence="1">
        <text>(S)-4-amino-5-oxopentanoate = 5-aminolevulinate</text>
        <dbReference type="Rhea" id="RHEA:14265"/>
        <dbReference type="ChEBI" id="CHEBI:57501"/>
        <dbReference type="ChEBI" id="CHEBI:356416"/>
        <dbReference type="EC" id="5.4.3.8"/>
    </reaction>
</comment>
<comment type="cofactor">
    <cofactor evidence="1">
        <name>pyridoxal 5'-phosphate</name>
        <dbReference type="ChEBI" id="CHEBI:597326"/>
    </cofactor>
</comment>
<comment type="pathway">
    <text evidence="1">Porphyrin-containing compound metabolism; protoporphyrin-IX biosynthesis; 5-aminolevulinate from L-glutamyl-tRNA(Glu): step 2/2.</text>
</comment>
<comment type="subunit">
    <text evidence="1">Homodimer.</text>
</comment>
<comment type="subcellular location">
    <subcellularLocation>
        <location evidence="1">Cytoplasm</location>
    </subcellularLocation>
</comment>
<comment type="similarity">
    <text evidence="1">Belongs to the class-III pyridoxal-phosphate-dependent aminotransferase family. HemL subfamily.</text>
</comment>
<proteinExistence type="inferred from homology"/>
<sequence>MNREKSTQLFAEAQHYIPGGVNSPVRAFKSVGGNPVYIEKGEGSRIFDVDGNSYIDYIGSWGPLILGHAHPRVLAAITEVAALGTSFGAPTERETEMAKLVCEIVPSVEVVRMVNSGTEATMSALRLARGYTRRNKIMKFEGCYHGHADSLLIKAGSGVATLGLPDSPGVPEGTAHNTITVPYNDLESVKLAFEAFGDDLAAVIVEPIGGNMGVVPPQPGFLEGLREITEKHGTLLIFDEVMTGFRVALGGAQELYGITPDLTTMGKVIGGGLPVGAYGGKREIMQQVAPAGPIYQAGTLSGNPLAMAAGLTTLQELSKPGAYERLEKMSARLAEGLADNAKKLGIPHTLNRVGSMVCLFFTETPVINYETAKTSDLERFSAYFSYLLEEGVMIPPSQFEGMFVSLAHTDEDIERTIEASYQAMKKAFK</sequence>
<gene>
    <name evidence="1" type="primary">hemL2</name>
    <name type="ordered locus">BBR47_18060</name>
</gene>
<dbReference type="EC" id="5.4.3.8" evidence="1"/>
<dbReference type="EMBL" id="AP008955">
    <property type="protein sequence ID" value="BAH42783.1"/>
    <property type="molecule type" value="Genomic_DNA"/>
</dbReference>
<dbReference type="RefSeq" id="WP_012685526.1">
    <property type="nucleotide sequence ID" value="NC_012491.1"/>
</dbReference>
<dbReference type="SMR" id="C0ZAH4"/>
<dbReference type="STRING" id="358681.BBR47_18060"/>
<dbReference type="KEGG" id="bbe:BBR47_18060"/>
<dbReference type="eggNOG" id="COG0001">
    <property type="taxonomic scope" value="Bacteria"/>
</dbReference>
<dbReference type="HOGENOM" id="CLU_016922_1_5_9"/>
<dbReference type="UniPathway" id="UPA00251">
    <property type="reaction ID" value="UER00317"/>
</dbReference>
<dbReference type="Proteomes" id="UP000001877">
    <property type="component" value="Chromosome"/>
</dbReference>
<dbReference type="GO" id="GO:0005737">
    <property type="term" value="C:cytoplasm"/>
    <property type="evidence" value="ECO:0007669"/>
    <property type="project" value="UniProtKB-SubCell"/>
</dbReference>
<dbReference type="GO" id="GO:0042286">
    <property type="term" value="F:glutamate-1-semialdehyde 2,1-aminomutase activity"/>
    <property type="evidence" value="ECO:0007669"/>
    <property type="project" value="UniProtKB-UniRule"/>
</dbReference>
<dbReference type="GO" id="GO:0030170">
    <property type="term" value="F:pyridoxal phosphate binding"/>
    <property type="evidence" value="ECO:0007669"/>
    <property type="project" value="InterPro"/>
</dbReference>
<dbReference type="GO" id="GO:0008483">
    <property type="term" value="F:transaminase activity"/>
    <property type="evidence" value="ECO:0007669"/>
    <property type="project" value="InterPro"/>
</dbReference>
<dbReference type="GO" id="GO:0006782">
    <property type="term" value="P:protoporphyrinogen IX biosynthetic process"/>
    <property type="evidence" value="ECO:0007669"/>
    <property type="project" value="UniProtKB-UniRule"/>
</dbReference>
<dbReference type="CDD" id="cd00610">
    <property type="entry name" value="OAT_like"/>
    <property type="match status" value="1"/>
</dbReference>
<dbReference type="FunFam" id="3.40.640.10:FF:000021">
    <property type="entry name" value="Glutamate-1-semialdehyde 2,1-aminomutase"/>
    <property type="match status" value="1"/>
</dbReference>
<dbReference type="Gene3D" id="3.90.1150.10">
    <property type="entry name" value="Aspartate Aminotransferase, domain 1"/>
    <property type="match status" value="1"/>
</dbReference>
<dbReference type="Gene3D" id="3.40.640.10">
    <property type="entry name" value="Type I PLP-dependent aspartate aminotransferase-like (Major domain)"/>
    <property type="match status" value="1"/>
</dbReference>
<dbReference type="HAMAP" id="MF_00375">
    <property type="entry name" value="HemL_aminotrans_3"/>
    <property type="match status" value="1"/>
</dbReference>
<dbReference type="InterPro" id="IPR004639">
    <property type="entry name" value="4pyrrol_synth_GluAld_NH2Trfase"/>
</dbReference>
<dbReference type="InterPro" id="IPR005814">
    <property type="entry name" value="Aminotrans_3"/>
</dbReference>
<dbReference type="InterPro" id="IPR049704">
    <property type="entry name" value="Aminotrans_3_PPA_site"/>
</dbReference>
<dbReference type="InterPro" id="IPR015424">
    <property type="entry name" value="PyrdxlP-dep_Trfase"/>
</dbReference>
<dbReference type="InterPro" id="IPR015421">
    <property type="entry name" value="PyrdxlP-dep_Trfase_major"/>
</dbReference>
<dbReference type="InterPro" id="IPR015422">
    <property type="entry name" value="PyrdxlP-dep_Trfase_small"/>
</dbReference>
<dbReference type="NCBIfam" id="TIGR00713">
    <property type="entry name" value="hemL"/>
    <property type="match status" value="1"/>
</dbReference>
<dbReference type="NCBIfam" id="NF000818">
    <property type="entry name" value="PRK00062.1"/>
    <property type="match status" value="1"/>
</dbReference>
<dbReference type="PANTHER" id="PTHR43713">
    <property type="entry name" value="GLUTAMATE-1-SEMIALDEHYDE 2,1-AMINOMUTASE"/>
    <property type="match status" value="1"/>
</dbReference>
<dbReference type="PANTHER" id="PTHR43713:SF3">
    <property type="entry name" value="GLUTAMATE-1-SEMIALDEHYDE 2,1-AMINOMUTASE 1, CHLOROPLASTIC-RELATED"/>
    <property type="match status" value="1"/>
</dbReference>
<dbReference type="Pfam" id="PF00202">
    <property type="entry name" value="Aminotran_3"/>
    <property type="match status" value="1"/>
</dbReference>
<dbReference type="SUPFAM" id="SSF53383">
    <property type="entry name" value="PLP-dependent transferases"/>
    <property type="match status" value="1"/>
</dbReference>
<dbReference type="PROSITE" id="PS00600">
    <property type="entry name" value="AA_TRANSFER_CLASS_3"/>
    <property type="match status" value="1"/>
</dbReference>
<feature type="chain" id="PRO_0000382285" description="Glutamate-1-semialdehyde 2,1-aminomutase 2">
    <location>
        <begin position="1"/>
        <end position="429"/>
    </location>
</feature>
<feature type="modified residue" description="N6-(pyridoxal phosphate)lysine" evidence="1">
    <location>
        <position position="267"/>
    </location>
</feature>
<accession>C0ZAH4</accession>
<evidence type="ECO:0000255" key="1">
    <source>
        <dbReference type="HAMAP-Rule" id="MF_00375"/>
    </source>
</evidence>
<name>GSA2_BREBN</name>